<name>RL27_CAUSK</name>
<dbReference type="EMBL" id="CP000927">
    <property type="protein sequence ID" value="ABZ69330.1"/>
    <property type="molecule type" value="Genomic_DNA"/>
</dbReference>
<dbReference type="SMR" id="B0T395"/>
<dbReference type="STRING" id="366602.Caul_0193"/>
<dbReference type="KEGG" id="cak:Caul_0193"/>
<dbReference type="eggNOG" id="COG0211">
    <property type="taxonomic scope" value="Bacteria"/>
</dbReference>
<dbReference type="HOGENOM" id="CLU_095424_4_1_5"/>
<dbReference type="OrthoDB" id="9803474at2"/>
<dbReference type="GO" id="GO:0022625">
    <property type="term" value="C:cytosolic large ribosomal subunit"/>
    <property type="evidence" value="ECO:0007669"/>
    <property type="project" value="TreeGrafter"/>
</dbReference>
<dbReference type="GO" id="GO:0003735">
    <property type="term" value="F:structural constituent of ribosome"/>
    <property type="evidence" value="ECO:0007669"/>
    <property type="project" value="InterPro"/>
</dbReference>
<dbReference type="GO" id="GO:0006412">
    <property type="term" value="P:translation"/>
    <property type="evidence" value="ECO:0007669"/>
    <property type="project" value="UniProtKB-UniRule"/>
</dbReference>
<dbReference type="FunFam" id="2.40.50.100:FF:000020">
    <property type="entry name" value="50S ribosomal protein L27"/>
    <property type="match status" value="1"/>
</dbReference>
<dbReference type="Gene3D" id="2.40.50.100">
    <property type="match status" value="1"/>
</dbReference>
<dbReference type="HAMAP" id="MF_00539">
    <property type="entry name" value="Ribosomal_bL27"/>
    <property type="match status" value="1"/>
</dbReference>
<dbReference type="InterPro" id="IPR001684">
    <property type="entry name" value="Ribosomal_bL27"/>
</dbReference>
<dbReference type="InterPro" id="IPR018261">
    <property type="entry name" value="Ribosomal_bL27_CS"/>
</dbReference>
<dbReference type="NCBIfam" id="TIGR00062">
    <property type="entry name" value="L27"/>
    <property type="match status" value="1"/>
</dbReference>
<dbReference type="PANTHER" id="PTHR15893:SF0">
    <property type="entry name" value="LARGE RIBOSOMAL SUBUNIT PROTEIN BL27M"/>
    <property type="match status" value="1"/>
</dbReference>
<dbReference type="PANTHER" id="PTHR15893">
    <property type="entry name" value="RIBOSOMAL PROTEIN L27"/>
    <property type="match status" value="1"/>
</dbReference>
<dbReference type="Pfam" id="PF01016">
    <property type="entry name" value="Ribosomal_L27"/>
    <property type="match status" value="1"/>
</dbReference>
<dbReference type="PRINTS" id="PR00063">
    <property type="entry name" value="RIBOSOMALL27"/>
</dbReference>
<dbReference type="SUPFAM" id="SSF110324">
    <property type="entry name" value="Ribosomal L27 protein-like"/>
    <property type="match status" value="1"/>
</dbReference>
<dbReference type="PROSITE" id="PS00831">
    <property type="entry name" value="RIBOSOMAL_L27"/>
    <property type="match status" value="1"/>
</dbReference>
<feature type="chain" id="PRO_1000081878" description="Large ribosomal subunit protein bL27">
    <location>
        <begin position="1"/>
        <end position="90"/>
    </location>
</feature>
<feature type="region of interest" description="Disordered" evidence="2">
    <location>
        <begin position="1"/>
        <end position="22"/>
    </location>
</feature>
<keyword id="KW-0687">Ribonucleoprotein</keyword>
<keyword id="KW-0689">Ribosomal protein</keyword>
<gene>
    <name evidence="1" type="primary">rpmA</name>
    <name type="ordered locus">Caul_0193</name>
</gene>
<accession>B0T395</accession>
<reference key="1">
    <citation type="submission" date="2008-01" db="EMBL/GenBank/DDBJ databases">
        <title>Complete sequence of chromosome of Caulobacter sp. K31.</title>
        <authorList>
            <consortium name="US DOE Joint Genome Institute"/>
            <person name="Copeland A."/>
            <person name="Lucas S."/>
            <person name="Lapidus A."/>
            <person name="Barry K."/>
            <person name="Glavina del Rio T."/>
            <person name="Dalin E."/>
            <person name="Tice H."/>
            <person name="Pitluck S."/>
            <person name="Bruce D."/>
            <person name="Goodwin L."/>
            <person name="Thompson L.S."/>
            <person name="Brettin T."/>
            <person name="Detter J.C."/>
            <person name="Han C."/>
            <person name="Schmutz J."/>
            <person name="Larimer F."/>
            <person name="Land M."/>
            <person name="Hauser L."/>
            <person name="Kyrpides N."/>
            <person name="Kim E."/>
            <person name="Stephens C."/>
            <person name="Richardson P."/>
        </authorList>
    </citation>
    <scope>NUCLEOTIDE SEQUENCE [LARGE SCALE GENOMIC DNA]</scope>
    <source>
        <strain>K31</strain>
    </source>
</reference>
<comment type="similarity">
    <text evidence="1">Belongs to the bacterial ribosomal protein bL27 family.</text>
</comment>
<protein>
    <recommendedName>
        <fullName evidence="1">Large ribosomal subunit protein bL27</fullName>
    </recommendedName>
    <alternativeName>
        <fullName evidence="3">50S ribosomal protein L27</fullName>
    </alternativeName>
</protein>
<organism>
    <name type="scientific">Caulobacter sp. (strain K31)</name>
    <dbReference type="NCBI Taxonomy" id="366602"/>
    <lineage>
        <taxon>Bacteria</taxon>
        <taxon>Pseudomonadati</taxon>
        <taxon>Pseudomonadota</taxon>
        <taxon>Alphaproteobacteria</taxon>
        <taxon>Caulobacterales</taxon>
        <taxon>Caulobacteraceae</taxon>
        <taxon>Caulobacter</taxon>
    </lineage>
</organism>
<sequence>MAHKKSGGSSSNGRDSAGRRLGVKKFGGQKVAAGNIIIRQRGTKFYPGANVGMGKDHTLFALIEGAVAFVTKRNNRTYVNVAAPVAQAAE</sequence>
<evidence type="ECO:0000255" key="1">
    <source>
        <dbReference type="HAMAP-Rule" id="MF_00539"/>
    </source>
</evidence>
<evidence type="ECO:0000256" key="2">
    <source>
        <dbReference type="SAM" id="MobiDB-lite"/>
    </source>
</evidence>
<evidence type="ECO:0000305" key="3"/>
<proteinExistence type="inferred from homology"/>